<feature type="chain" id="PRO_0000076218" description="Protein-lysine N-methyltransferase EEF2KMT">
    <location>
        <begin position="1"/>
        <end position="330"/>
    </location>
</feature>
<feature type="binding site" evidence="1">
    <location>
        <position position="139"/>
    </location>
    <ligand>
        <name>S-adenosyl-L-methionine</name>
        <dbReference type="ChEBI" id="CHEBI:59789"/>
    </ligand>
</feature>
<feature type="binding site" evidence="1">
    <location>
        <begin position="165"/>
        <end position="167"/>
    </location>
    <ligand>
        <name>S-adenosyl-L-methionine</name>
        <dbReference type="ChEBI" id="CHEBI:59789"/>
    </ligand>
</feature>
<feature type="binding site" evidence="1">
    <location>
        <position position="228"/>
    </location>
    <ligand>
        <name>S-adenosyl-L-methionine</name>
        <dbReference type="ChEBI" id="CHEBI:59789"/>
    </ligand>
</feature>
<feature type="binding site" evidence="1">
    <location>
        <position position="247"/>
    </location>
    <ligand>
        <name>S-adenosyl-L-methionine</name>
        <dbReference type="ChEBI" id="CHEBI:59789"/>
    </ligand>
</feature>
<feature type="modified residue" description="N-acetylmethionine" evidence="10">
    <location>
        <position position="1"/>
    </location>
</feature>
<feature type="splice variant" id="VSP_017097" description="In isoform 2." evidence="6">
    <location>
        <begin position="81"/>
        <end position="114"/>
    </location>
</feature>
<feature type="sequence variant" id="VAR_033854" description="In dbSNP:rs9673733.">
    <original>S</original>
    <variation>C</variation>
    <location>
        <position position="123"/>
    </location>
</feature>
<feature type="sequence variant" id="VAR_067704" description="In dbSNP:rs148557961.">
    <original>V</original>
    <variation>I</variation>
    <location>
        <position position="230"/>
    </location>
</feature>
<feature type="sequence variant" id="VAR_060160" description="In dbSNP:rs3204207.">
    <original>R</original>
    <variation>W</variation>
    <location>
        <position position="270"/>
    </location>
</feature>
<feature type="sequence variant" id="VAR_067705" description="In dbSNP:rs12928528." evidence="2 5">
    <original>H</original>
    <variation>D</variation>
    <location>
        <position position="272"/>
    </location>
</feature>
<feature type="sequence variant" id="VAR_067706" description="In dbSNP:rs760584474.">
    <original>T</original>
    <variation>I</variation>
    <location>
        <position position="329"/>
    </location>
</feature>
<feature type="helix" evidence="11">
    <location>
        <begin position="7"/>
        <end position="21"/>
    </location>
</feature>
<feature type="helix" evidence="11">
    <location>
        <begin position="26"/>
        <end position="28"/>
    </location>
</feature>
<feature type="helix" evidence="11">
    <location>
        <begin position="31"/>
        <end position="40"/>
    </location>
</feature>
<feature type="helix" evidence="11">
    <location>
        <begin position="45"/>
        <end position="53"/>
    </location>
</feature>
<feature type="turn" evidence="11">
    <location>
        <begin position="54"/>
        <end position="56"/>
    </location>
</feature>
<feature type="helix" evidence="11">
    <location>
        <begin position="58"/>
        <end position="62"/>
    </location>
</feature>
<feature type="helix" evidence="11">
    <location>
        <begin position="67"/>
        <end position="83"/>
    </location>
</feature>
<feature type="helix" evidence="11">
    <location>
        <begin position="90"/>
        <end position="101"/>
    </location>
</feature>
<feature type="strand" evidence="11">
    <location>
        <begin position="110"/>
        <end position="113"/>
    </location>
</feature>
<feature type="strand" evidence="11">
    <location>
        <begin position="119"/>
        <end position="122"/>
    </location>
</feature>
<feature type="helix" evidence="11">
    <location>
        <begin position="140"/>
        <end position="151"/>
    </location>
</feature>
<feature type="helix" evidence="11">
    <location>
        <begin position="153"/>
        <end position="155"/>
    </location>
</feature>
<feature type="turn" evidence="11">
    <location>
        <begin position="156"/>
        <end position="158"/>
    </location>
</feature>
<feature type="strand" evidence="11">
    <location>
        <begin position="160"/>
        <end position="165"/>
    </location>
</feature>
<feature type="helix" evidence="11">
    <location>
        <begin position="170"/>
        <end position="178"/>
    </location>
</feature>
<feature type="strand" evidence="11">
    <location>
        <begin position="182"/>
        <end position="189"/>
    </location>
</feature>
<feature type="helix" evidence="11">
    <location>
        <begin position="191"/>
        <end position="203"/>
    </location>
</feature>
<feature type="strand" evidence="11">
    <location>
        <begin position="208"/>
        <end position="211"/>
    </location>
</feature>
<feature type="turn" evidence="11">
    <location>
        <begin position="215"/>
        <end position="217"/>
    </location>
</feature>
<feature type="strand" evidence="11">
    <location>
        <begin position="220"/>
        <end position="225"/>
    </location>
</feature>
<feature type="turn" evidence="11">
    <location>
        <begin position="228"/>
        <end position="230"/>
    </location>
</feature>
<feature type="helix" evidence="11">
    <location>
        <begin position="233"/>
        <end position="237"/>
    </location>
</feature>
<feature type="strand" evidence="11">
    <location>
        <begin position="242"/>
        <end position="248"/>
    </location>
</feature>
<feature type="helix" evidence="11">
    <location>
        <begin position="253"/>
        <end position="269"/>
    </location>
</feature>
<feature type="strand" evidence="11">
    <location>
        <begin position="277"/>
        <end position="283"/>
    </location>
</feature>
<feature type="helix" evidence="11">
    <location>
        <begin position="287"/>
        <end position="300"/>
    </location>
</feature>
<feature type="strand" evidence="11">
    <location>
        <begin position="303"/>
        <end position="306"/>
    </location>
</feature>
<feature type="strand" evidence="11">
    <location>
        <begin position="323"/>
        <end position="329"/>
    </location>
</feature>
<reference key="1">
    <citation type="submission" date="2001-05" db="EMBL/GenBank/DDBJ databases">
        <authorList>
            <person name="Li N."/>
            <person name="Zhang M."/>
            <person name="Wan T."/>
            <person name="Zhang W."/>
            <person name="Cao X."/>
        </authorList>
    </citation>
    <scope>NUCLEOTIDE SEQUENCE [LARGE SCALE MRNA] (ISOFORM 2)</scope>
</reference>
<reference key="2">
    <citation type="submission" date="2005-09" db="EMBL/GenBank/DDBJ databases">
        <authorList>
            <person name="Mural R.J."/>
            <person name="Istrail S."/>
            <person name="Sutton G."/>
            <person name="Florea L."/>
            <person name="Halpern A.L."/>
            <person name="Mobarry C.M."/>
            <person name="Lippert R."/>
            <person name="Walenz B."/>
            <person name="Shatkay H."/>
            <person name="Dew I."/>
            <person name="Miller J.R."/>
            <person name="Flanigan M.J."/>
            <person name="Edwards N.J."/>
            <person name="Bolanos R."/>
            <person name="Fasulo D."/>
            <person name="Halldorsson B.V."/>
            <person name="Hannenhalli S."/>
            <person name="Turner R."/>
            <person name="Yooseph S."/>
            <person name="Lu F."/>
            <person name="Nusskern D.R."/>
            <person name="Shue B.C."/>
            <person name="Zheng X.H."/>
            <person name="Zhong F."/>
            <person name="Delcher A.L."/>
            <person name="Huson D.H."/>
            <person name="Kravitz S.A."/>
            <person name="Mouchard L."/>
            <person name="Reinert K."/>
            <person name="Remington K.A."/>
            <person name="Clark A.G."/>
            <person name="Waterman M.S."/>
            <person name="Eichler E.E."/>
            <person name="Adams M.D."/>
            <person name="Hunkapiller M.W."/>
            <person name="Myers E.W."/>
            <person name="Venter J.C."/>
        </authorList>
    </citation>
    <scope>NUCLEOTIDE SEQUENCE [LARGE SCALE GENOMIC DNA]</scope>
    <scope>VARIANT ASP-272</scope>
</reference>
<reference key="3">
    <citation type="journal article" date="2004" name="Genome Res.">
        <title>The status, quality, and expansion of the NIH full-length cDNA project: the Mammalian Gene Collection (MGC).</title>
        <authorList>
            <consortium name="The MGC Project Team"/>
        </authorList>
    </citation>
    <scope>NUCLEOTIDE SEQUENCE [LARGE SCALE MRNA] (ISOFORM 1)</scope>
    <scope>VARIANT ASP-272</scope>
    <source>
        <tissue>Lung</tissue>
    </source>
</reference>
<reference key="4">
    <citation type="journal article" date="2012" name="Proc. Natl. Acad. Sci. U.S.A.">
        <title>N-terminal acetylome analyses and functional insights of the N-terminal acetyltransferase NatB.</title>
        <authorList>
            <person name="Van Damme P."/>
            <person name="Lasa M."/>
            <person name="Polevoda B."/>
            <person name="Gazquez C."/>
            <person name="Elosegui-Artola A."/>
            <person name="Kim D.S."/>
            <person name="De Juan-Pardo E."/>
            <person name="Demeyer K."/>
            <person name="Hole K."/>
            <person name="Larrea E."/>
            <person name="Timmerman E."/>
            <person name="Prieto J."/>
            <person name="Arnesen T."/>
            <person name="Sherman F."/>
            <person name="Gevaert K."/>
            <person name="Aldabe R."/>
        </authorList>
    </citation>
    <scope>ACETYLATION [LARGE SCALE ANALYSIS] AT MET-1</scope>
    <scope>IDENTIFICATION BY MASS SPECTROMETRY [LARGE SCALE ANALYSIS]</scope>
</reference>
<reference key="5">
    <citation type="journal article" date="2013" name="PLoS Genet.">
        <title>A newly uncovered group of distantly related lysine methyltransferases preferentially interact with molecular chaperones to regulate their activity.</title>
        <authorList>
            <person name="Cloutier P."/>
            <person name="Lavallee-Adam M."/>
            <person name="Faubert D."/>
            <person name="Blanchette M."/>
            <person name="Coulombe B."/>
        </authorList>
    </citation>
    <scope>INTERACTION WITH FAM86B2 AND FAM86C1P</scope>
    <scope>SUBCELLULAR LOCATION</scope>
</reference>
<reference key="6">
    <citation type="journal article" date="2014" name="J. Biol. Chem.">
        <title>Identification and characterization of a novel evolutionarily conserved lysine-specific methyltransferase targeting eukaryotic translation elongation factor 2 (eEF2).</title>
        <authorList>
            <person name="Davydova E."/>
            <person name="Ho A.Y."/>
            <person name="Malecki J."/>
            <person name="Moen A."/>
            <person name="Enserink J.M."/>
            <person name="Jakobsson M.E."/>
            <person name="Loenarz C."/>
            <person name="Falnes P.O."/>
        </authorList>
    </citation>
    <scope>FUNCTION</scope>
    <scope>CATALYTIC ACTIVITY</scope>
</reference>
<gene>
    <name evidence="9" type="primary">EEF2KMT</name>
    <name evidence="9" type="synonym">FAM86A</name>
    <name type="ORF">SB153</name>
</gene>
<name>EF2KT_HUMAN</name>
<accession>Q96G04</accession>
<accession>D3DUF0</accession>
<accession>Q96S85</accession>
<protein>
    <recommendedName>
        <fullName evidence="7">Protein-lysine N-methyltransferase EEF2KMT</fullName>
        <ecNumber evidence="4">2.1.1.-</ecNumber>
    </recommendedName>
    <alternativeName>
        <fullName>eEF2-lysine methyltransferase</fullName>
        <shortName>eEF2-KMT</shortName>
    </alternativeName>
</protein>
<dbReference type="EC" id="2.1.1.-" evidence="4"/>
<dbReference type="EMBL" id="AY037162">
    <property type="protein sequence ID" value="AAK67640.1"/>
    <property type="molecule type" value="mRNA"/>
</dbReference>
<dbReference type="EMBL" id="CH471112">
    <property type="protein sequence ID" value="EAW85235.1"/>
    <property type="molecule type" value="Genomic_DNA"/>
</dbReference>
<dbReference type="EMBL" id="CH471112">
    <property type="protein sequence ID" value="EAW85236.1"/>
    <property type="molecule type" value="Genomic_DNA"/>
</dbReference>
<dbReference type="EMBL" id="BC010084">
    <property type="protein sequence ID" value="AAH10084.1"/>
    <property type="molecule type" value="mRNA"/>
</dbReference>
<dbReference type="CCDS" id="CCDS10529.1">
    <molecule id="Q96G04-1"/>
</dbReference>
<dbReference type="CCDS" id="CCDS10530.1">
    <molecule id="Q96G04-2"/>
</dbReference>
<dbReference type="RefSeq" id="NP_001275958.1">
    <property type="nucleotide sequence ID" value="NM_001289029.1"/>
</dbReference>
<dbReference type="RefSeq" id="NP_958802.1">
    <molecule id="Q96G04-1"/>
    <property type="nucleotide sequence ID" value="NM_201400.4"/>
</dbReference>
<dbReference type="RefSeq" id="NP_963892.1">
    <molecule id="Q96G04-2"/>
    <property type="nucleotide sequence ID" value="NM_201598.4"/>
</dbReference>
<dbReference type="PDB" id="8FZB">
    <property type="method" value="X-ray"/>
    <property type="resolution" value="3.35 A"/>
    <property type="chains" value="A/B/C=1-330"/>
</dbReference>
<dbReference type="PDBsum" id="8FZB"/>
<dbReference type="SMR" id="Q96G04"/>
<dbReference type="BioGRID" id="128213">
    <property type="interactions" value="29"/>
</dbReference>
<dbReference type="FunCoup" id="Q96G04">
    <property type="interactions" value="711"/>
</dbReference>
<dbReference type="IntAct" id="Q96G04">
    <property type="interactions" value="19"/>
</dbReference>
<dbReference type="STRING" id="9606.ENSP00000398502"/>
<dbReference type="GlyGen" id="Q96G04">
    <property type="glycosylation" value="1 site, 1 O-linked glycan (1 site)"/>
</dbReference>
<dbReference type="iPTMnet" id="Q96G04"/>
<dbReference type="PhosphoSitePlus" id="Q96G04"/>
<dbReference type="BioMuta" id="EEF2KMT"/>
<dbReference type="DMDM" id="85700958"/>
<dbReference type="jPOST" id="Q96G04"/>
<dbReference type="MassIVE" id="Q96G04"/>
<dbReference type="PaxDb" id="9606-ENSP00000398502"/>
<dbReference type="PeptideAtlas" id="Q96G04"/>
<dbReference type="ProteomicsDB" id="76581">
    <molecule id="Q96G04-1"/>
</dbReference>
<dbReference type="ProteomicsDB" id="76582">
    <molecule id="Q96G04-2"/>
</dbReference>
<dbReference type="Pumba" id="Q96G04"/>
<dbReference type="Antibodypedia" id="55831">
    <property type="antibodies" value="55 antibodies from 12 providers"/>
</dbReference>
<dbReference type="DNASU" id="196483"/>
<dbReference type="Ensembl" id="ENST00000427587.9">
    <molecule id="Q96G04-1"/>
    <property type="protein sequence ID" value="ENSP00000398502.3"/>
    <property type="gene ID" value="ENSG00000118894.15"/>
</dbReference>
<dbReference type="Ensembl" id="ENST00000458008.8">
    <molecule id="Q96G04-2"/>
    <property type="protein sequence ID" value="ENSP00000389710.3"/>
    <property type="gene ID" value="ENSG00000118894.15"/>
</dbReference>
<dbReference type="GeneID" id="196483"/>
<dbReference type="KEGG" id="hsa:196483"/>
<dbReference type="MANE-Select" id="ENST00000427587.9">
    <property type="protein sequence ID" value="ENSP00000398502.3"/>
    <property type="RefSeq nucleotide sequence ID" value="NM_201400.4"/>
    <property type="RefSeq protein sequence ID" value="NP_958802.1"/>
</dbReference>
<dbReference type="UCSC" id="uc002cyo.4">
    <molecule id="Q96G04-1"/>
    <property type="organism name" value="human"/>
</dbReference>
<dbReference type="AGR" id="HGNC:32221"/>
<dbReference type="CTD" id="196483"/>
<dbReference type="DisGeNET" id="196483"/>
<dbReference type="GeneCards" id="EEF2KMT"/>
<dbReference type="HGNC" id="HGNC:32221">
    <property type="gene designation" value="EEF2KMT"/>
</dbReference>
<dbReference type="HPA" id="ENSG00000118894">
    <property type="expression patterns" value="Low tissue specificity"/>
</dbReference>
<dbReference type="MalaCards" id="EEF2KMT"/>
<dbReference type="MIM" id="615263">
    <property type="type" value="gene"/>
</dbReference>
<dbReference type="neXtProt" id="NX_Q96G04"/>
<dbReference type="OpenTargets" id="ENSG00000118894"/>
<dbReference type="PharmGKB" id="PA142671858"/>
<dbReference type="VEuPathDB" id="HostDB:ENSG00000118894"/>
<dbReference type="eggNOG" id="KOG2497">
    <property type="taxonomic scope" value="Eukaryota"/>
</dbReference>
<dbReference type="GeneTree" id="ENSGT00510000047003"/>
<dbReference type="HOGENOM" id="CLU_038942_0_0_1"/>
<dbReference type="InParanoid" id="Q96G04"/>
<dbReference type="OMA" id="PIRTYRI"/>
<dbReference type="OrthoDB" id="194386at2759"/>
<dbReference type="PAN-GO" id="Q96G04">
    <property type="GO annotations" value="2 GO annotations based on evolutionary models"/>
</dbReference>
<dbReference type="PhylomeDB" id="Q96G04"/>
<dbReference type="TreeFam" id="TF326304"/>
<dbReference type="PathwayCommons" id="Q96G04"/>
<dbReference type="Reactome" id="R-HSA-8876725">
    <property type="pathway name" value="Protein methylation"/>
</dbReference>
<dbReference type="SignaLink" id="Q96G04"/>
<dbReference type="BioGRID-ORCS" id="196483">
    <property type="hits" value="439 hits in 1091 CRISPR screens"/>
</dbReference>
<dbReference type="ChiTaRS" id="EEF2KMT">
    <property type="organism name" value="human"/>
</dbReference>
<dbReference type="GenomeRNAi" id="196483"/>
<dbReference type="Pharos" id="Q96G04">
    <property type="development level" value="Tbio"/>
</dbReference>
<dbReference type="PRO" id="PR:Q96G04"/>
<dbReference type="Proteomes" id="UP000005640">
    <property type="component" value="Chromosome 16"/>
</dbReference>
<dbReference type="RNAct" id="Q96G04">
    <property type="molecule type" value="protein"/>
</dbReference>
<dbReference type="Bgee" id="ENSG00000118894">
    <property type="expression patterns" value="Expressed in male germ line stem cell (sensu Vertebrata) in testis and 111 other cell types or tissues"/>
</dbReference>
<dbReference type="ExpressionAtlas" id="Q96G04">
    <property type="expression patterns" value="baseline and differential"/>
</dbReference>
<dbReference type="GO" id="GO:0005737">
    <property type="term" value="C:cytoplasm"/>
    <property type="evidence" value="ECO:0000314"/>
    <property type="project" value="UniProtKB"/>
</dbReference>
<dbReference type="GO" id="GO:0005829">
    <property type="term" value="C:cytosol"/>
    <property type="evidence" value="ECO:0000304"/>
    <property type="project" value="Reactome"/>
</dbReference>
<dbReference type="GO" id="GO:0032991">
    <property type="term" value="C:protein-containing complex"/>
    <property type="evidence" value="ECO:0000314"/>
    <property type="project" value="UniProtKB"/>
</dbReference>
<dbReference type="GO" id="GO:0016279">
    <property type="term" value="F:protein-lysine N-methyltransferase activity"/>
    <property type="evidence" value="ECO:0000314"/>
    <property type="project" value="UniProtKB"/>
</dbReference>
<dbReference type="GO" id="GO:0018023">
    <property type="term" value="P:peptidyl-lysine trimethylation"/>
    <property type="evidence" value="ECO:0000314"/>
    <property type="project" value="UniProtKB"/>
</dbReference>
<dbReference type="FunFam" id="3.40.50.150:FF:000242">
    <property type="entry name" value="Protein-lysine N-methyltransferase EEF2KMT"/>
    <property type="match status" value="1"/>
</dbReference>
<dbReference type="Gene3D" id="3.40.50.150">
    <property type="entry name" value="Vaccinia Virus protein VP39"/>
    <property type="match status" value="1"/>
</dbReference>
<dbReference type="InterPro" id="IPR029426">
    <property type="entry name" value="FAM86_N"/>
</dbReference>
<dbReference type="InterPro" id="IPR019410">
    <property type="entry name" value="Methyltransf_16"/>
</dbReference>
<dbReference type="InterPro" id="IPR029063">
    <property type="entry name" value="SAM-dependent_MTases_sf"/>
</dbReference>
<dbReference type="PANTHER" id="PTHR14614">
    <property type="entry name" value="HEPATOCELLULAR CARCINOMA-ASSOCIATED ANTIGEN"/>
    <property type="match status" value="1"/>
</dbReference>
<dbReference type="PANTHER" id="PTHR14614:SF117">
    <property type="entry name" value="PROTEIN-LYSINE N-METHYLTRANSFERASE EEF2KMT-RELATED"/>
    <property type="match status" value="1"/>
</dbReference>
<dbReference type="Pfam" id="PF14904">
    <property type="entry name" value="FAM86"/>
    <property type="match status" value="1"/>
</dbReference>
<dbReference type="Pfam" id="PF10294">
    <property type="entry name" value="Methyltransf_16"/>
    <property type="match status" value="1"/>
</dbReference>
<dbReference type="SUPFAM" id="SSF53335">
    <property type="entry name" value="S-adenosyl-L-methionine-dependent methyltransferases"/>
    <property type="match status" value="1"/>
</dbReference>
<proteinExistence type="evidence at protein level"/>
<evidence type="ECO:0000250" key="1">
    <source>
        <dbReference type="UniProtKB" id="Q9H867"/>
    </source>
</evidence>
<evidence type="ECO:0000269" key="2">
    <source>
    </source>
</evidence>
<evidence type="ECO:0000269" key="3">
    <source>
    </source>
</evidence>
<evidence type="ECO:0000269" key="4">
    <source>
    </source>
</evidence>
<evidence type="ECO:0000269" key="5">
    <source ref="2"/>
</evidence>
<evidence type="ECO:0000303" key="6">
    <source ref="1"/>
</evidence>
<evidence type="ECO:0000305" key="7"/>
<evidence type="ECO:0000305" key="8">
    <source>
    </source>
</evidence>
<evidence type="ECO:0000312" key="9">
    <source>
        <dbReference type="HGNC" id="HGNC:32221"/>
    </source>
</evidence>
<evidence type="ECO:0007744" key="10">
    <source>
    </source>
</evidence>
<evidence type="ECO:0007829" key="11">
    <source>
        <dbReference type="PDB" id="8FZB"/>
    </source>
</evidence>
<sequence>MAPEENAGTELLLQSFERRFLAARTLRSFPWQSLEAKLRDSSDSELLRDILHKTVKHPVCVKHPPSVKYARCFLSELIKKHEAVHTEPLDELYEALAETLMAKESTQGHRSYLLPSGGSVTLSESTAIISYGTTGLVTWDAALYLAEWAIENPAVFTNRTVLELGSGAGLTGLAICKMCRPRAYIFSDCHSRVLEQLRGNVLLNGLSLEADITAKLDSPRVTVAQLDWDVATVHQLSAFQPDVVIAADVLYCPEAIMSLVGVLRRLAACREHQRAPEVYVAFTVRNPETCQLFTTELGRAGIRWEVEPRHEQKLFPYEEHLEMAMLNLTL</sequence>
<organism>
    <name type="scientific">Homo sapiens</name>
    <name type="common">Human</name>
    <dbReference type="NCBI Taxonomy" id="9606"/>
    <lineage>
        <taxon>Eukaryota</taxon>
        <taxon>Metazoa</taxon>
        <taxon>Chordata</taxon>
        <taxon>Craniata</taxon>
        <taxon>Vertebrata</taxon>
        <taxon>Euteleostomi</taxon>
        <taxon>Mammalia</taxon>
        <taxon>Eutheria</taxon>
        <taxon>Euarchontoglires</taxon>
        <taxon>Primates</taxon>
        <taxon>Haplorrhini</taxon>
        <taxon>Catarrhini</taxon>
        <taxon>Hominidae</taxon>
        <taxon>Homo</taxon>
    </lineage>
</organism>
<keyword id="KW-0002">3D-structure</keyword>
<keyword id="KW-0007">Acetylation</keyword>
<keyword id="KW-0025">Alternative splicing</keyword>
<keyword id="KW-0963">Cytoplasm</keyword>
<keyword id="KW-0489">Methyltransferase</keyword>
<keyword id="KW-1267">Proteomics identification</keyword>
<keyword id="KW-1185">Reference proteome</keyword>
<keyword id="KW-0949">S-adenosyl-L-methionine</keyword>
<keyword id="KW-0808">Transferase</keyword>
<comment type="function">
    <text evidence="4">Catalyzes the trimethylation of eukaryotic elongation factor 2 (EEF2) on 'Lys-525'.</text>
</comment>
<comment type="catalytic activity">
    <reaction evidence="4">
        <text>L-lysyl-[protein] + 3 S-adenosyl-L-methionine = N(6),N(6),N(6)-trimethyl-L-lysyl-[protein] + 3 S-adenosyl-L-homocysteine + 3 H(+)</text>
        <dbReference type="Rhea" id="RHEA:54192"/>
        <dbReference type="Rhea" id="RHEA-COMP:9752"/>
        <dbReference type="Rhea" id="RHEA-COMP:13826"/>
        <dbReference type="ChEBI" id="CHEBI:15378"/>
        <dbReference type="ChEBI" id="CHEBI:29969"/>
        <dbReference type="ChEBI" id="CHEBI:57856"/>
        <dbReference type="ChEBI" id="CHEBI:59789"/>
        <dbReference type="ChEBI" id="CHEBI:61961"/>
    </reaction>
    <physiologicalReaction direction="left-to-right" evidence="8">
        <dbReference type="Rhea" id="RHEA:54193"/>
    </physiologicalReaction>
</comment>
<comment type="subunit">
    <text evidence="3">Interacts with FAM86B2 and FAM86C1P.</text>
</comment>
<comment type="interaction">
    <interactant intactId="EBI-747840">
        <id>Q96G04</id>
    </interactant>
    <interactant intactId="EBI-748210">
        <id>P00492</id>
        <label>HPRT1</label>
    </interactant>
    <organismsDiffer>false</organismsDiffer>
    <experiments>3</experiments>
</comment>
<comment type="interaction">
    <interactant intactId="EBI-747840">
        <id>Q96G04</id>
    </interactant>
    <interactant intactId="EBI-347427">
        <id>Q13099</id>
        <label>IFT88</label>
    </interactant>
    <organismsDiffer>false</organismsDiffer>
    <experiments>3</experiments>
</comment>
<comment type="interaction">
    <interactant intactId="EBI-747840">
        <id>Q96G04</id>
    </interactant>
    <interactant intactId="EBI-3437878">
        <id>Q86T90</id>
        <label>KIAA1328</label>
    </interactant>
    <organismsDiffer>false</organismsDiffer>
    <experiments>3</experiments>
</comment>
<comment type="interaction">
    <interactant intactId="EBI-747840">
        <id>Q96G04</id>
    </interactant>
    <interactant intactId="EBI-739832">
        <id>Q8TBB1</id>
        <label>LNX1</label>
    </interactant>
    <organismsDiffer>false</organismsDiffer>
    <experiments>3</experiments>
</comment>
<comment type="interaction">
    <interactant intactId="EBI-747840">
        <id>Q96G04</id>
    </interactant>
    <interactant intactId="EBI-946109">
        <id>P51843</id>
        <label>NR0B1</label>
    </interactant>
    <organismsDiffer>false</organismsDiffer>
    <experiments>3</experiments>
</comment>
<comment type="interaction">
    <interactant intactId="EBI-747840">
        <id>Q96G04</id>
    </interactant>
    <interactant intactId="EBI-79165">
        <id>Q9NRD5</id>
        <label>PICK1</label>
    </interactant>
    <organismsDiffer>false</organismsDiffer>
    <experiments>3</experiments>
</comment>
<comment type="interaction">
    <interactant intactId="EBI-747840">
        <id>Q96G04</id>
    </interactant>
    <interactant intactId="EBI-2805516">
        <id>P31321</id>
        <label>PRKAR1B</label>
    </interactant>
    <organismsDiffer>false</organismsDiffer>
    <experiments>3</experiments>
</comment>
<comment type="interaction">
    <interactant intactId="EBI-747840">
        <id>Q96G04</id>
    </interactant>
    <interactant intactId="EBI-739759">
        <id>Q9NRG1</id>
        <label>PRTFDC1</label>
    </interactant>
    <organismsDiffer>false</organismsDiffer>
    <experiments>8</experiments>
</comment>
<comment type="interaction">
    <interactant intactId="EBI-747840">
        <id>Q96G04</id>
    </interactant>
    <interactant intactId="EBI-358993">
        <id>Q15645</id>
        <label>TRIP13</label>
    </interactant>
    <organismsDiffer>false</organismsDiffer>
    <experiments>3</experiments>
</comment>
<comment type="interaction">
    <interactant intactId="EBI-747840">
        <id>Q96G04</id>
    </interactant>
    <interactant intactId="EBI-12838388">
        <id>O14771</id>
        <label>ZNF213</label>
    </interactant>
    <organismsDiffer>false</organismsDiffer>
    <experiments>3</experiments>
</comment>
<comment type="interaction">
    <interactant intactId="EBI-747840">
        <id>Q96G04</id>
    </interactant>
    <interactant intactId="EBI-11041653">
        <id>P13682</id>
        <label>ZNF35</label>
    </interactant>
    <organismsDiffer>false</organismsDiffer>
    <experiments>3</experiments>
</comment>
<comment type="interaction">
    <interactant intactId="EBI-747840">
        <id>Q96G04</id>
    </interactant>
    <interactant intactId="EBI-4395669">
        <id>Q6ZNG0</id>
        <label>ZNF620</label>
    </interactant>
    <organismsDiffer>false</organismsDiffer>
    <experiments>3</experiments>
</comment>
<comment type="subcellular location">
    <subcellularLocation>
        <location evidence="3">Cytoplasm</location>
    </subcellularLocation>
</comment>
<comment type="alternative products">
    <event type="alternative splicing"/>
    <isoform>
        <id>Q96G04-1</id>
        <name>1</name>
        <sequence type="displayed"/>
    </isoform>
    <isoform>
        <id>Q96G04-2</id>
        <name>2</name>
        <sequence type="described" ref="VSP_017097"/>
    </isoform>
</comment>
<comment type="similarity">
    <text evidence="7">Belongs to the class I-like SAM-binding methyltransferase superfamily. EEF2KMT family.</text>
</comment>